<protein>
    <recommendedName>
        <fullName>1370.6 Da venom vasodilator peptide</fullName>
    </recommendedName>
</protein>
<proteinExistence type="evidence at protein level"/>
<organism>
    <name type="scientific">Bothrops moojeni</name>
    <name type="common">Lance-headed viper</name>
    <name type="synonym">Caissaca</name>
    <dbReference type="NCBI Taxonomy" id="98334"/>
    <lineage>
        <taxon>Eukaryota</taxon>
        <taxon>Metazoa</taxon>
        <taxon>Chordata</taxon>
        <taxon>Craniata</taxon>
        <taxon>Vertebrata</taxon>
        <taxon>Euteleostomi</taxon>
        <taxon>Lepidosauria</taxon>
        <taxon>Squamata</taxon>
        <taxon>Bifurcata</taxon>
        <taxon>Unidentata</taxon>
        <taxon>Episquamata</taxon>
        <taxon>Toxicofera</taxon>
        <taxon>Serpentes</taxon>
        <taxon>Colubroidea</taxon>
        <taxon>Viperidae</taxon>
        <taxon>Crotalinae</taxon>
        <taxon>Bothrops</taxon>
    </lineage>
</organism>
<keyword id="KW-0903">Direct protein sequencing</keyword>
<keyword id="KW-0488">Methylation</keyword>
<keyword id="KW-0964">Secreted</keyword>
<keyword id="KW-0800">Toxin</keyword>
<sequence length="12" mass="1371">PKVSPRWPPIPP</sequence>
<comment type="function">
    <text evidence="1">Toxin. Induces vasodilation in mice and rabbits.</text>
</comment>
<comment type="subcellular location">
    <subcellularLocation>
        <location evidence="1">Secreted</location>
    </subcellularLocation>
</comment>
<comment type="tissue specificity">
    <text evidence="1">Expressed by the venom gland.</text>
</comment>
<comment type="PTM">
    <text evidence="1">Occurs in two forms. In form 1384.7 Da venom vasodilator peptide Lys-2 is methylated. In form 1370.6 Da venom vasodilator peptide Lys-2 is not methylated.</text>
</comment>
<comment type="mass spectrometry" mass="1370.6719" error="1.0" method="MALDI" evidence="1">
    <text>Form 1370.6 Da venom vasodilator peptide.</text>
</comment>
<comment type="mass spectrometry" mass="1384.72" error="1.0" method="MALDI" evidence="1">
    <text>Form 1384.7 Da venom vasodilator peptide.</text>
</comment>
<accession>P84747</accession>
<feature type="peptide" id="PRO_0000045325" description="1370.6 Da venom vasodilator peptide">
    <location>
        <begin position="1"/>
        <end position="12"/>
    </location>
</feature>
<feature type="modified residue" description="N6-methyllysine; partial" evidence="1">
    <location>
        <position position="2"/>
    </location>
</feature>
<dbReference type="GO" id="GO:0005576">
    <property type="term" value="C:extracellular region"/>
    <property type="evidence" value="ECO:0007669"/>
    <property type="project" value="UniProtKB-SubCell"/>
</dbReference>
<dbReference type="GO" id="GO:0090729">
    <property type="term" value="F:toxin activity"/>
    <property type="evidence" value="ECO:0007669"/>
    <property type="project" value="UniProtKB-KW"/>
</dbReference>
<evidence type="ECO:0000269" key="1">
    <source ref="1"/>
</evidence>
<evidence type="ECO:0000305" key="2"/>
<reference evidence="2" key="1">
    <citation type="submission" date="2005-11" db="UniProtKB">
        <authorList>
            <person name="Guedes H.L.M."/>
            <person name="Correa-Neto C."/>
            <person name="De Simone S.G."/>
        </authorList>
    </citation>
    <scope>PROTEIN SEQUENCE</scope>
    <scope>FUNCTION</scope>
    <scope>SUBCELLULAR LOCATION</scope>
    <scope>TISSUE SPECIFICITY</scope>
    <scope>MASS SPECTROMETRY</scope>
    <scope>METHYLATION AT LYS-2</scope>
    <source>
        <tissue>Venom</tissue>
    </source>
</reference>
<name>VVP1_BOTMO</name>